<reference key="1">
    <citation type="submission" date="2006-12" db="EMBL/GenBank/DDBJ databases">
        <title>Complete sequence of chromosome 1 of Verminephrobacter eiseniae EF01-2.</title>
        <authorList>
            <person name="Copeland A."/>
            <person name="Lucas S."/>
            <person name="Lapidus A."/>
            <person name="Barry K."/>
            <person name="Detter J.C."/>
            <person name="Glavina del Rio T."/>
            <person name="Dalin E."/>
            <person name="Tice H."/>
            <person name="Pitluck S."/>
            <person name="Chertkov O."/>
            <person name="Brettin T."/>
            <person name="Bruce D."/>
            <person name="Han C."/>
            <person name="Tapia R."/>
            <person name="Gilna P."/>
            <person name="Schmutz J."/>
            <person name="Larimer F."/>
            <person name="Land M."/>
            <person name="Hauser L."/>
            <person name="Kyrpides N."/>
            <person name="Kim E."/>
            <person name="Stahl D."/>
            <person name="Richardson P."/>
        </authorList>
    </citation>
    <scope>NUCLEOTIDE SEQUENCE [LARGE SCALE GENOMIC DNA]</scope>
    <source>
        <strain>EF01-2</strain>
    </source>
</reference>
<proteinExistence type="inferred from homology"/>
<name>RL16_VEREI</name>
<sequence>MLQPARRKYRKEQKGRNTGVATRGATVAFGDFGLKCTDRGRLTARQIEAARRAISRHVKRGGRIWIRVFPDKPISTKPAEVRMGNGKGNPEYYVAEIQPGKIVFEIVGVPEELAREAFRLAAAKLPLRTTFVSRLIGA</sequence>
<keyword id="KW-1185">Reference proteome</keyword>
<keyword id="KW-0687">Ribonucleoprotein</keyword>
<keyword id="KW-0689">Ribosomal protein</keyword>
<keyword id="KW-0694">RNA-binding</keyword>
<keyword id="KW-0699">rRNA-binding</keyword>
<keyword id="KW-0820">tRNA-binding</keyword>
<dbReference type="EMBL" id="CP000542">
    <property type="protein sequence ID" value="ABM57039.1"/>
    <property type="molecule type" value="Genomic_DNA"/>
</dbReference>
<dbReference type="RefSeq" id="WP_011809049.1">
    <property type="nucleotide sequence ID" value="NC_008786.1"/>
</dbReference>
<dbReference type="SMR" id="A1WHD2"/>
<dbReference type="STRING" id="391735.Veis_1271"/>
<dbReference type="GeneID" id="76459918"/>
<dbReference type="KEGG" id="vei:Veis_1271"/>
<dbReference type="eggNOG" id="COG0197">
    <property type="taxonomic scope" value="Bacteria"/>
</dbReference>
<dbReference type="HOGENOM" id="CLU_078858_2_1_4"/>
<dbReference type="OrthoDB" id="9802589at2"/>
<dbReference type="Proteomes" id="UP000000374">
    <property type="component" value="Chromosome"/>
</dbReference>
<dbReference type="GO" id="GO:0022625">
    <property type="term" value="C:cytosolic large ribosomal subunit"/>
    <property type="evidence" value="ECO:0007669"/>
    <property type="project" value="TreeGrafter"/>
</dbReference>
<dbReference type="GO" id="GO:0019843">
    <property type="term" value="F:rRNA binding"/>
    <property type="evidence" value="ECO:0007669"/>
    <property type="project" value="UniProtKB-UniRule"/>
</dbReference>
<dbReference type="GO" id="GO:0003735">
    <property type="term" value="F:structural constituent of ribosome"/>
    <property type="evidence" value="ECO:0007669"/>
    <property type="project" value="InterPro"/>
</dbReference>
<dbReference type="GO" id="GO:0000049">
    <property type="term" value="F:tRNA binding"/>
    <property type="evidence" value="ECO:0007669"/>
    <property type="project" value="UniProtKB-KW"/>
</dbReference>
<dbReference type="GO" id="GO:0006412">
    <property type="term" value="P:translation"/>
    <property type="evidence" value="ECO:0007669"/>
    <property type="project" value="UniProtKB-UniRule"/>
</dbReference>
<dbReference type="CDD" id="cd01433">
    <property type="entry name" value="Ribosomal_L16_L10e"/>
    <property type="match status" value="1"/>
</dbReference>
<dbReference type="FunFam" id="3.90.1170.10:FF:000001">
    <property type="entry name" value="50S ribosomal protein L16"/>
    <property type="match status" value="1"/>
</dbReference>
<dbReference type="Gene3D" id="3.90.1170.10">
    <property type="entry name" value="Ribosomal protein L10e/L16"/>
    <property type="match status" value="1"/>
</dbReference>
<dbReference type="HAMAP" id="MF_01342">
    <property type="entry name" value="Ribosomal_uL16"/>
    <property type="match status" value="1"/>
</dbReference>
<dbReference type="InterPro" id="IPR047873">
    <property type="entry name" value="Ribosomal_uL16"/>
</dbReference>
<dbReference type="InterPro" id="IPR000114">
    <property type="entry name" value="Ribosomal_uL16_bact-type"/>
</dbReference>
<dbReference type="InterPro" id="IPR020798">
    <property type="entry name" value="Ribosomal_uL16_CS"/>
</dbReference>
<dbReference type="InterPro" id="IPR016180">
    <property type="entry name" value="Ribosomal_uL16_dom"/>
</dbReference>
<dbReference type="InterPro" id="IPR036920">
    <property type="entry name" value="Ribosomal_uL16_sf"/>
</dbReference>
<dbReference type="NCBIfam" id="TIGR01164">
    <property type="entry name" value="rplP_bact"/>
    <property type="match status" value="1"/>
</dbReference>
<dbReference type="PANTHER" id="PTHR12220">
    <property type="entry name" value="50S/60S RIBOSOMAL PROTEIN L16"/>
    <property type="match status" value="1"/>
</dbReference>
<dbReference type="PANTHER" id="PTHR12220:SF13">
    <property type="entry name" value="LARGE RIBOSOMAL SUBUNIT PROTEIN UL16M"/>
    <property type="match status" value="1"/>
</dbReference>
<dbReference type="Pfam" id="PF00252">
    <property type="entry name" value="Ribosomal_L16"/>
    <property type="match status" value="1"/>
</dbReference>
<dbReference type="PRINTS" id="PR00060">
    <property type="entry name" value="RIBOSOMALL16"/>
</dbReference>
<dbReference type="SUPFAM" id="SSF54686">
    <property type="entry name" value="Ribosomal protein L16p/L10e"/>
    <property type="match status" value="1"/>
</dbReference>
<dbReference type="PROSITE" id="PS00586">
    <property type="entry name" value="RIBOSOMAL_L16_1"/>
    <property type="match status" value="1"/>
</dbReference>
<evidence type="ECO:0000255" key="1">
    <source>
        <dbReference type="HAMAP-Rule" id="MF_01342"/>
    </source>
</evidence>
<evidence type="ECO:0000256" key="2">
    <source>
        <dbReference type="SAM" id="MobiDB-lite"/>
    </source>
</evidence>
<evidence type="ECO:0000305" key="3"/>
<protein>
    <recommendedName>
        <fullName evidence="1">Large ribosomal subunit protein uL16</fullName>
    </recommendedName>
    <alternativeName>
        <fullName evidence="3">50S ribosomal protein L16</fullName>
    </alternativeName>
</protein>
<feature type="chain" id="PRO_1000054729" description="Large ribosomal subunit protein uL16">
    <location>
        <begin position="1"/>
        <end position="138"/>
    </location>
</feature>
<feature type="region of interest" description="Disordered" evidence="2">
    <location>
        <begin position="1"/>
        <end position="20"/>
    </location>
</feature>
<feature type="compositionally biased region" description="Basic residues" evidence="2">
    <location>
        <begin position="1"/>
        <end position="13"/>
    </location>
</feature>
<gene>
    <name evidence="1" type="primary">rplP</name>
    <name type="ordered locus">Veis_1271</name>
</gene>
<comment type="function">
    <text evidence="1">Binds 23S rRNA and is also seen to make contacts with the A and possibly P site tRNAs.</text>
</comment>
<comment type="subunit">
    <text evidence="1">Part of the 50S ribosomal subunit.</text>
</comment>
<comment type="similarity">
    <text evidence="1">Belongs to the universal ribosomal protein uL16 family.</text>
</comment>
<accession>A1WHD2</accession>
<organism>
    <name type="scientific">Verminephrobacter eiseniae (strain EF01-2)</name>
    <dbReference type="NCBI Taxonomy" id="391735"/>
    <lineage>
        <taxon>Bacteria</taxon>
        <taxon>Pseudomonadati</taxon>
        <taxon>Pseudomonadota</taxon>
        <taxon>Betaproteobacteria</taxon>
        <taxon>Burkholderiales</taxon>
        <taxon>Comamonadaceae</taxon>
        <taxon>Verminephrobacter</taxon>
    </lineage>
</organism>